<name>TX2_HETPN</name>
<dbReference type="SMR" id="P0DV96"/>
<dbReference type="GO" id="GO:0005576">
    <property type="term" value="C:extracellular region"/>
    <property type="evidence" value="ECO:0007669"/>
    <property type="project" value="UniProtKB-SubCell"/>
</dbReference>
<dbReference type="GO" id="GO:0017080">
    <property type="term" value="F:sodium channel regulator activity"/>
    <property type="evidence" value="ECO:0007669"/>
    <property type="project" value="UniProtKB-KW"/>
</dbReference>
<dbReference type="GO" id="GO:0090729">
    <property type="term" value="F:toxin activity"/>
    <property type="evidence" value="ECO:0007669"/>
    <property type="project" value="UniProtKB-KW"/>
</dbReference>
<dbReference type="SUPFAM" id="SSF57059">
    <property type="entry name" value="omega toxin-like"/>
    <property type="match status" value="1"/>
</dbReference>
<sequence>MKIIVLMMMLFAAFSAVVLADKSIEDAALDTVMDRDDDKKECIGHMGWCAWTDGECCEGYRCKLWCRKIIDWLG</sequence>
<evidence type="ECO:0000250" key="1">
    <source>
        <dbReference type="UniProtKB" id="P60590"/>
    </source>
</evidence>
<evidence type="ECO:0000255" key="2"/>
<evidence type="ECO:0000269" key="3">
    <source>
    </source>
</evidence>
<evidence type="ECO:0000303" key="4">
    <source>
    </source>
</evidence>
<evidence type="ECO:0000305" key="5"/>
<evidence type="ECO:0000305" key="6">
    <source>
    </source>
</evidence>
<proteinExistence type="evidence at protein level"/>
<protein>
    <recommendedName>
        <fullName evidence="4">Mu-Sparatoxin-Hp2</fullName>
    </recommendedName>
    <alternativeName>
        <fullName evidence="4">HptTx-133</fullName>
    </alternativeName>
</protein>
<accession>P0DV96</accession>
<reference key="1">
    <citation type="journal article" date="2022" name="Toxins">
        <title>Molecular diversity of peptide toxins in the venom of spider heteropoda pingtungensis as revealed by cdna library and transcriptome sequencing analysis.</title>
        <authorList>
            <person name="Liao Q."/>
            <person name="Kong X."/>
            <person name="Luo G."/>
            <person name="Wu X."/>
            <person name="Li Y."/>
            <person name="Liu Q."/>
            <person name="Tang C."/>
            <person name="Liu Z."/>
        </authorList>
    </citation>
    <scope>NUCLEOTIDE SEQUENCE [MRNA]</scope>
    <scope>PARTIAL PROTEIN SEQUENCE</scope>
    <scope>AMIDATION AT LEU-73</scope>
    <scope>SUBCELLULAR LOCATION</scope>
    <scope>MASS SPECTROMETRY</scope>
    <source>
        <tissue>Venom</tissue>
        <tissue>Venom gland</tissue>
    </source>
</reference>
<comment type="function">
    <text evidence="3">Weakly nhibits voltage-gated sodium channels Nav1.7/SCN9A. High concentration of the toxin (3 uM) inhibits Nav1.7/SCN9A currents by 80%.</text>
</comment>
<comment type="subcellular location">
    <subcellularLocation>
        <location evidence="3">Secreted</location>
    </subcellularLocation>
</comment>
<comment type="tissue specificity">
    <text evidence="6">Expressed by the venom gland.</text>
</comment>
<comment type="domain">
    <text evidence="5">The presence of a 'disulfide through disulfide knot' structurally defines this protein as a knottin.</text>
</comment>
<comment type="mass spectrometry"/>
<comment type="similarity">
    <text evidence="5">Belongs to the neurotoxin 10 (Hwtx-1) family.</text>
</comment>
<organism>
    <name type="scientific">Heteropoda pingtungensis</name>
    <name type="common">Pingtung huntsman spider</name>
    <dbReference type="NCBI Taxonomy" id="2926465"/>
    <lineage>
        <taxon>Eukaryota</taxon>
        <taxon>Metazoa</taxon>
        <taxon>Ecdysozoa</taxon>
        <taxon>Arthropoda</taxon>
        <taxon>Chelicerata</taxon>
        <taxon>Arachnida</taxon>
        <taxon>Araneae</taxon>
        <taxon>Araneomorphae</taxon>
        <taxon>Entelegynae</taxon>
        <taxon>Dionycha</taxon>
        <taxon>Sparassidae</taxon>
        <taxon>Heteropoda</taxon>
    </lineage>
</organism>
<keyword id="KW-0027">Amidation</keyword>
<keyword id="KW-0903">Direct protein sequencing</keyword>
<keyword id="KW-1015">Disulfide bond</keyword>
<keyword id="KW-0872">Ion channel impairing toxin</keyword>
<keyword id="KW-0960">Knottin</keyword>
<keyword id="KW-0528">Neurotoxin</keyword>
<keyword id="KW-0964">Secreted</keyword>
<keyword id="KW-0732">Signal</keyword>
<keyword id="KW-0800">Toxin</keyword>
<keyword id="KW-0738">Voltage-gated sodium channel impairing toxin</keyword>
<feature type="signal peptide" evidence="2">
    <location>
        <begin position="1"/>
        <end position="20"/>
    </location>
</feature>
<feature type="propeptide" id="PRO_0000455815" evidence="6">
    <location>
        <begin position="21"/>
        <end position="35"/>
    </location>
</feature>
<feature type="chain" id="PRO_0000455816" description="Mu-Sparatoxin-Hp2" evidence="3">
    <location>
        <begin position="36"/>
        <end position="73"/>
    </location>
</feature>
<feature type="modified residue" description="Leucine amide" evidence="3">
    <location>
        <position position="73"/>
    </location>
</feature>
<feature type="disulfide bond" evidence="1">
    <location>
        <begin position="42"/>
        <end position="57"/>
    </location>
</feature>
<feature type="disulfide bond" evidence="1">
    <location>
        <begin position="49"/>
        <end position="62"/>
    </location>
</feature>
<feature type="disulfide bond" evidence="1">
    <location>
        <begin position="56"/>
        <end position="66"/>
    </location>
</feature>